<gene>
    <name type="primary">SERPING1</name>
</gene>
<dbReference type="eggNOG" id="KOG2392">
    <property type="taxonomic scope" value="Eukaryota"/>
</dbReference>
<dbReference type="InParanoid" id="Q9TRG2"/>
<dbReference type="Proteomes" id="UP000001811">
    <property type="component" value="Unplaced"/>
</dbReference>
<dbReference type="GO" id="GO:0005576">
    <property type="term" value="C:extracellular region"/>
    <property type="evidence" value="ECO:0007669"/>
    <property type="project" value="UniProtKB-SubCell"/>
</dbReference>
<dbReference type="GO" id="GO:0004867">
    <property type="term" value="F:serine-type endopeptidase inhibitor activity"/>
    <property type="evidence" value="ECO:0000250"/>
    <property type="project" value="UniProtKB"/>
</dbReference>
<dbReference type="GO" id="GO:0007596">
    <property type="term" value="P:blood coagulation"/>
    <property type="evidence" value="ECO:0007669"/>
    <property type="project" value="UniProtKB-KW"/>
</dbReference>
<dbReference type="GO" id="GO:0006958">
    <property type="term" value="P:complement activation, classical pathway"/>
    <property type="evidence" value="ECO:0007669"/>
    <property type="project" value="UniProtKB-KW"/>
</dbReference>
<dbReference type="GO" id="GO:0042730">
    <property type="term" value="P:fibrinolysis"/>
    <property type="evidence" value="ECO:0007669"/>
    <property type="project" value="UniProtKB-KW"/>
</dbReference>
<dbReference type="GO" id="GO:0045087">
    <property type="term" value="P:innate immune response"/>
    <property type="evidence" value="ECO:0007669"/>
    <property type="project" value="UniProtKB-KW"/>
</dbReference>
<dbReference type="GO" id="GO:0001869">
    <property type="term" value="P:negative regulation of complement activation, lectin pathway"/>
    <property type="evidence" value="ECO:0000250"/>
    <property type="project" value="UniProtKB"/>
</dbReference>
<dbReference type="PROSITE" id="PS00284">
    <property type="entry name" value="SERPIN"/>
    <property type="match status" value="1"/>
</dbReference>
<accession>Q9TRG2</accession>
<feature type="chain" id="PRO_0000348610" description="Plasma protease C1 inhibitor">
    <location>
        <begin position="1" status="less than"/>
        <end position="18" status="greater than"/>
    </location>
</feature>
<feature type="site" description="Reactive bond for chymotrypsin" evidence="1">
    <location>
        <begin position="2"/>
        <end position="3"/>
    </location>
</feature>
<feature type="site" description="Reactive bond" evidence="1">
    <location>
        <begin position="3"/>
        <end position="4"/>
    </location>
</feature>
<feature type="non-terminal residue" evidence="4">
    <location>
        <position position="1"/>
    </location>
</feature>
<feature type="non-terminal residue" evidence="4">
    <location>
        <position position="18"/>
    </location>
</feature>
<reference evidence="5" key="1">
    <citation type="journal article" date="1993" name="Protein Sci.">
        <title>Chymotrypsin inhibitory activity of normal C1-inhibitor and a P1 Arg to His mutant: evidence for the presence of overlapping reactive centers.</title>
        <authorList>
            <person name="Aulak K.S."/>
            <person name="Davis A.E. III"/>
            <person name="Donaldson V.H."/>
            <person name="Harrison R.A."/>
        </authorList>
    </citation>
    <scope>PROTEIN SEQUENCE</scope>
    <scope>FUNCTION</scope>
    <source>
        <tissue evidence="3">Plasma</tissue>
    </source>
</reference>
<keyword id="KW-0094">Blood coagulation</keyword>
<keyword id="KW-0903">Direct protein sequencing</keyword>
<keyword id="KW-0280">Fibrinolysis</keyword>
<keyword id="KW-0325">Glycoprotein</keyword>
<keyword id="KW-0356">Hemostasis</keyword>
<keyword id="KW-0646">Protease inhibitor</keyword>
<keyword id="KW-1185">Reference proteome</keyword>
<keyword id="KW-0964">Secreted</keyword>
<keyword id="KW-0722">Serine protease inhibitor</keyword>
<protein>
    <recommendedName>
        <fullName evidence="4">Plasma protease C1 inhibitor</fullName>
        <shortName evidence="1">C1 Inh</shortName>
        <shortName evidence="1">C1Inh</shortName>
    </recommendedName>
    <alternativeName>
        <fullName evidence="1">C1 esterase inhibitor</fullName>
    </alternativeName>
    <alternativeName>
        <fullName evidence="1">C1-inhibiting factor</fullName>
    </alternativeName>
    <alternativeName>
        <fullName>Serpin G1</fullName>
    </alternativeName>
</protein>
<proteinExistence type="evidence at protein level"/>
<sequence>VARSLLIFEVQQPFLFLL</sequence>
<evidence type="ECO:0000250" key="1">
    <source>
        <dbReference type="UniProtKB" id="P05155"/>
    </source>
</evidence>
<evidence type="ECO:0000255" key="2"/>
<evidence type="ECO:0000269" key="3">
    <source>
    </source>
</evidence>
<evidence type="ECO:0000303" key="4">
    <source>
    </source>
</evidence>
<evidence type="ECO:0000305" key="5"/>
<organism>
    <name type="scientific">Oryctolagus cuniculus</name>
    <name type="common">Rabbit</name>
    <dbReference type="NCBI Taxonomy" id="9986"/>
    <lineage>
        <taxon>Eukaryota</taxon>
        <taxon>Metazoa</taxon>
        <taxon>Chordata</taxon>
        <taxon>Craniata</taxon>
        <taxon>Vertebrata</taxon>
        <taxon>Euteleostomi</taxon>
        <taxon>Mammalia</taxon>
        <taxon>Eutheria</taxon>
        <taxon>Euarchontoglires</taxon>
        <taxon>Glires</taxon>
        <taxon>Lagomorpha</taxon>
        <taxon>Leporidae</taxon>
        <taxon>Oryctolagus</taxon>
    </lineage>
</organism>
<name>IC1_RABIT</name>
<comment type="function">
    <text evidence="1 3">Serine protease inhibitor, which acrs as a regulator of the classical complement pathway (PubMed:8495195). Forms a proteolytically inactive stoichiometric complex with the C1r or C1s proteases. May also regulate blood coagulation, fibrinolysis and the generation of kinins. Very efficient inhibitor of FXIIa. Inhibits chymotrypsin and kallikrein (By similarity).</text>
</comment>
<comment type="subunit">
    <text evidence="1">Interacts with MASP1.</text>
</comment>
<comment type="subcellular location">
    <subcellularLocation>
        <location evidence="1">Secreted</location>
    </subcellularLocation>
</comment>
<comment type="PTM">
    <text evidence="1">Glycosylated.</text>
</comment>
<comment type="similarity">
    <text evidence="2">Belongs to the serpin family.</text>
</comment>